<keyword id="KW-0479">Metal-binding</keyword>
<keyword id="KW-1185">Reference proteome</keyword>
<keyword id="KW-0862">Zinc</keyword>
<keyword id="KW-0863">Zinc-finger</keyword>
<accession>Q7YR36</accession>
<sequence length="188" mass="20631">MPKRKKQNQHQPPTQQQPPLPEREETGDEEDGSPIGPPSLLGPPPMANGKPGDPKSALHRGPPGSRGPLIPPLLSLPPPPWGRGPIRRGLGPRSSPYGRGWWGVNAEPPFPGPGHGGPTRGSFHKEQRNPRRLKSWSLIKNTCPPKDDPQVMEDKSDRPVCRHFAKKGHCRYEDLCAFYHPGVNGPPL</sequence>
<gene>
    <name type="primary">PRR3</name>
    <name type="synonym">CAT56</name>
</gene>
<reference key="1">
    <citation type="journal article" date="2003" name="Proc. Natl. Acad. Sci. U.S.A.">
        <title>Comparative sequencing of human and chimpanzee MHC class I regions unveils insertions/deletions as the major path to genomic divergence.</title>
        <authorList>
            <person name="Anzai T."/>
            <person name="Shiina T."/>
            <person name="Kimura N."/>
            <person name="Yanagiya K."/>
            <person name="Kohara S."/>
            <person name="Shigenari A."/>
            <person name="Yamagata T."/>
            <person name="Kulski J.K."/>
            <person name="Naruse T.K."/>
            <person name="Fujimori Y."/>
            <person name="Fukuzumi Y."/>
            <person name="Yamazaki M."/>
            <person name="Tashiro H."/>
            <person name="Iwamoto C."/>
            <person name="Umehara Y."/>
            <person name="Imanishi T."/>
            <person name="Meyer A."/>
            <person name="Ikeo K."/>
            <person name="Gojobori T."/>
            <person name="Bahram S."/>
            <person name="Inoko H."/>
        </authorList>
    </citation>
    <scope>NUCLEOTIDE SEQUENCE [LARGE SCALE GENOMIC DNA]</scope>
</reference>
<evidence type="ECO:0000255" key="1">
    <source>
        <dbReference type="PROSITE-ProRule" id="PRU00723"/>
    </source>
</evidence>
<evidence type="ECO:0000256" key="2">
    <source>
        <dbReference type="SAM" id="MobiDB-lite"/>
    </source>
</evidence>
<dbReference type="EMBL" id="BA000041">
    <property type="protein sequence ID" value="BAC78180.1"/>
    <property type="molecule type" value="Genomic_DNA"/>
</dbReference>
<dbReference type="RefSeq" id="NP_001038964.1">
    <property type="nucleotide sequence ID" value="NM_001045499.1"/>
</dbReference>
<dbReference type="FunCoup" id="Q7YR36">
    <property type="interactions" value="1258"/>
</dbReference>
<dbReference type="STRING" id="9598.ENSPTRP00000063386"/>
<dbReference type="PaxDb" id="9598-ENSPTRP00000054597"/>
<dbReference type="GeneID" id="462542"/>
<dbReference type="KEGG" id="ptr:462542"/>
<dbReference type="CTD" id="80742"/>
<dbReference type="eggNOG" id="ENOG502TAPB">
    <property type="taxonomic scope" value="Eukaryota"/>
</dbReference>
<dbReference type="HOGENOM" id="CLU_112270_0_0_1"/>
<dbReference type="InParanoid" id="Q7YR36"/>
<dbReference type="OrthoDB" id="16991at9604"/>
<dbReference type="TreeFam" id="TF337284"/>
<dbReference type="Proteomes" id="UP000002277">
    <property type="component" value="Unplaced"/>
</dbReference>
<dbReference type="GO" id="GO:0008270">
    <property type="term" value="F:zinc ion binding"/>
    <property type="evidence" value="ECO:0007669"/>
    <property type="project" value="UniProtKB-KW"/>
</dbReference>
<dbReference type="Gene3D" id="4.10.1000.10">
    <property type="entry name" value="Zinc finger, CCCH-type"/>
    <property type="match status" value="1"/>
</dbReference>
<dbReference type="InterPro" id="IPR042805">
    <property type="entry name" value="PRR3"/>
</dbReference>
<dbReference type="InterPro" id="IPR000571">
    <property type="entry name" value="Znf_CCCH"/>
</dbReference>
<dbReference type="InterPro" id="IPR036855">
    <property type="entry name" value="Znf_CCCH_sf"/>
</dbReference>
<dbReference type="PANTHER" id="PTHR47398">
    <property type="entry name" value="PROLINE-RICH PROTEIN 3"/>
    <property type="match status" value="1"/>
</dbReference>
<dbReference type="PANTHER" id="PTHR47398:SF1">
    <property type="entry name" value="PROLINE-RICH PROTEIN 3-RELATED"/>
    <property type="match status" value="1"/>
</dbReference>
<dbReference type="Pfam" id="PF00642">
    <property type="entry name" value="zf-CCCH"/>
    <property type="match status" value="1"/>
</dbReference>
<dbReference type="SMART" id="SM00356">
    <property type="entry name" value="ZnF_C3H1"/>
    <property type="match status" value="1"/>
</dbReference>
<dbReference type="SUPFAM" id="SSF90229">
    <property type="entry name" value="CCCH zinc finger"/>
    <property type="match status" value="1"/>
</dbReference>
<dbReference type="PROSITE" id="PS50103">
    <property type="entry name" value="ZF_C3H1"/>
    <property type="match status" value="1"/>
</dbReference>
<feature type="chain" id="PRO_0000213891" description="Proline-rich protein 3">
    <location>
        <begin position="1"/>
        <end position="188"/>
    </location>
</feature>
<feature type="zinc finger region" description="C3H1-type" evidence="1">
    <location>
        <begin position="155"/>
        <end position="183"/>
    </location>
</feature>
<feature type="region of interest" description="Disordered" evidence="2">
    <location>
        <begin position="1"/>
        <end position="157"/>
    </location>
</feature>
<feature type="compositionally biased region" description="Pro residues" evidence="2">
    <location>
        <begin position="35"/>
        <end position="46"/>
    </location>
</feature>
<feature type="compositionally biased region" description="Pro residues" evidence="2">
    <location>
        <begin position="69"/>
        <end position="82"/>
    </location>
</feature>
<feature type="compositionally biased region" description="Low complexity" evidence="2">
    <location>
        <begin position="83"/>
        <end position="96"/>
    </location>
</feature>
<feature type="compositionally biased region" description="Basic and acidic residues" evidence="2">
    <location>
        <begin position="145"/>
        <end position="157"/>
    </location>
</feature>
<protein>
    <recommendedName>
        <fullName>Proline-rich protein 3</fullName>
    </recommendedName>
    <alternativeName>
        <fullName>MHC class I region proline-rich protein CAT56</fullName>
    </alternativeName>
</protein>
<proteinExistence type="predicted"/>
<organism>
    <name type="scientific">Pan troglodytes</name>
    <name type="common">Chimpanzee</name>
    <dbReference type="NCBI Taxonomy" id="9598"/>
    <lineage>
        <taxon>Eukaryota</taxon>
        <taxon>Metazoa</taxon>
        <taxon>Chordata</taxon>
        <taxon>Craniata</taxon>
        <taxon>Vertebrata</taxon>
        <taxon>Euteleostomi</taxon>
        <taxon>Mammalia</taxon>
        <taxon>Eutheria</taxon>
        <taxon>Euarchontoglires</taxon>
        <taxon>Primates</taxon>
        <taxon>Haplorrhini</taxon>
        <taxon>Catarrhini</taxon>
        <taxon>Hominidae</taxon>
        <taxon>Pan</taxon>
    </lineage>
</organism>
<name>PRR3_PANTR</name>